<name>PUR5_ALKEH</name>
<dbReference type="EC" id="6.3.3.1" evidence="1"/>
<dbReference type="EMBL" id="CP000453">
    <property type="protein sequence ID" value="ABI55870.1"/>
    <property type="molecule type" value="Genomic_DNA"/>
</dbReference>
<dbReference type="RefSeq" id="WP_011628265.1">
    <property type="nucleotide sequence ID" value="NC_008340.1"/>
</dbReference>
<dbReference type="SMR" id="Q0ABB7"/>
<dbReference type="KEGG" id="aeh:Mlg_0516"/>
<dbReference type="eggNOG" id="COG0150">
    <property type="taxonomic scope" value="Bacteria"/>
</dbReference>
<dbReference type="HOGENOM" id="CLU_047116_0_0_6"/>
<dbReference type="OrthoDB" id="9777881at2"/>
<dbReference type="UniPathway" id="UPA00074">
    <property type="reaction ID" value="UER00129"/>
</dbReference>
<dbReference type="Proteomes" id="UP000001962">
    <property type="component" value="Chromosome"/>
</dbReference>
<dbReference type="GO" id="GO:0005829">
    <property type="term" value="C:cytosol"/>
    <property type="evidence" value="ECO:0007669"/>
    <property type="project" value="TreeGrafter"/>
</dbReference>
<dbReference type="GO" id="GO:0005524">
    <property type="term" value="F:ATP binding"/>
    <property type="evidence" value="ECO:0007669"/>
    <property type="project" value="UniProtKB-KW"/>
</dbReference>
<dbReference type="GO" id="GO:0004637">
    <property type="term" value="F:phosphoribosylamine-glycine ligase activity"/>
    <property type="evidence" value="ECO:0007669"/>
    <property type="project" value="TreeGrafter"/>
</dbReference>
<dbReference type="GO" id="GO:0004641">
    <property type="term" value="F:phosphoribosylformylglycinamidine cyclo-ligase activity"/>
    <property type="evidence" value="ECO:0007669"/>
    <property type="project" value="UniProtKB-UniRule"/>
</dbReference>
<dbReference type="GO" id="GO:0006189">
    <property type="term" value="P:'de novo' IMP biosynthetic process"/>
    <property type="evidence" value="ECO:0007669"/>
    <property type="project" value="UniProtKB-UniRule"/>
</dbReference>
<dbReference type="GO" id="GO:0046084">
    <property type="term" value="P:adenine biosynthetic process"/>
    <property type="evidence" value="ECO:0007669"/>
    <property type="project" value="TreeGrafter"/>
</dbReference>
<dbReference type="CDD" id="cd02196">
    <property type="entry name" value="PurM"/>
    <property type="match status" value="1"/>
</dbReference>
<dbReference type="FunFam" id="3.30.1330.10:FF:000001">
    <property type="entry name" value="Phosphoribosylformylglycinamidine cyclo-ligase"/>
    <property type="match status" value="1"/>
</dbReference>
<dbReference type="FunFam" id="3.90.650.10:FF:000001">
    <property type="entry name" value="Phosphoribosylformylglycinamidine cyclo-ligase"/>
    <property type="match status" value="1"/>
</dbReference>
<dbReference type="Gene3D" id="3.90.650.10">
    <property type="entry name" value="PurM-like C-terminal domain"/>
    <property type="match status" value="1"/>
</dbReference>
<dbReference type="Gene3D" id="3.30.1330.10">
    <property type="entry name" value="PurM-like, N-terminal domain"/>
    <property type="match status" value="1"/>
</dbReference>
<dbReference type="HAMAP" id="MF_00741">
    <property type="entry name" value="AIRS"/>
    <property type="match status" value="1"/>
</dbReference>
<dbReference type="InterPro" id="IPR010918">
    <property type="entry name" value="PurM-like_C_dom"/>
</dbReference>
<dbReference type="InterPro" id="IPR036676">
    <property type="entry name" value="PurM-like_C_sf"/>
</dbReference>
<dbReference type="InterPro" id="IPR016188">
    <property type="entry name" value="PurM-like_N"/>
</dbReference>
<dbReference type="InterPro" id="IPR036921">
    <property type="entry name" value="PurM-like_N_sf"/>
</dbReference>
<dbReference type="InterPro" id="IPR004733">
    <property type="entry name" value="PurM_cligase"/>
</dbReference>
<dbReference type="NCBIfam" id="TIGR00878">
    <property type="entry name" value="purM"/>
    <property type="match status" value="1"/>
</dbReference>
<dbReference type="PANTHER" id="PTHR10520:SF12">
    <property type="entry name" value="TRIFUNCTIONAL PURINE BIOSYNTHETIC PROTEIN ADENOSINE-3"/>
    <property type="match status" value="1"/>
</dbReference>
<dbReference type="PANTHER" id="PTHR10520">
    <property type="entry name" value="TRIFUNCTIONAL PURINE BIOSYNTHETIC PROTEIN ADENOSINE-3-RELATED"/>
    <property type="match status" value="1"/>
</dbReference>
<dbReference type="Pfam" id="PF00586">
    <property type="entry name" value="AIRS"/>
    <property type="match status" value="1"/>
</dbReference>
<dbReference type="Pfam" id="PF02769">
    <property type="entry name" value="AIRS_C"/>
    <property type="match status" value="1"/>
</dbReference>
<dbReference type="SUPFAM" id="SSF56042">
    <property type="entry name" value="PurM C-terminal domain-like"/>
    <property type="match status" value="1"/>
</dbReference>
<dbReference type="SUPFAM" id="SSF55326">
    <property type="entry name" value="PurM N-terminal domain-like"/>
    <property type="match status" value="1"/>
</dbReference>
<comment type="catalytic activity">
    <reaction evidence="1">
        <text>2-formamido-N(1)-(5-O-phospho-beta-D-ribosyl)acetamidine + ATP = 5-amino-1-(5-phospho-beta-D-ribosyl)imidazole + ADP + phosphate + H(+)</text>
        <dbReference type="Rhea" id="RHEA:23032"/>
        <dbReference type="ChEBI" id="CHEBI:15378"/>
        <dbReference type="ChEBI" id="CHEBI:30616"/>
        <dbReference type="ChEBI" id="CHEBI:43474"/>
        <dbReference type="ChEBI" id="CHEBI:137981"/>
        <dbReference type="ChEBI" id="CHEBI:147287"/>
        <dbReference type="ChEBI" id="CHEBI:456216"/>
        <dbReference type="EC" id="6.3.3.1"/>
    </reaction>
</comment>
<comment type="pathway">
    <text evidence="1">Purine metabolism; IMP biosynthesis via de novo pathway; 5-amino-1-(5-phospho-D-ribosyl)imidazole from N(2)-formyl-N(1)-(5-phospho-D-ribosyl)glycinamide: step 2/2.</text>
</comment>
<comment type="subcellular location">
    <subcellularLocation>
        <location evidence="1">Cytoplasm</location>
    </subcellularLocation>
</comment>
<comment type="similarity">
    <text evidence="1">Belongs to the AIR synthase family.</text>
</comment>
<reference key="1">
    <citation type="submission" date="2006-08" db="EMBL/GenBank/DDBJ databases">
        <title>Complete sequence of Alkalilimnicola ehrilichei MLHE-1.</title>
        <authorList>
            <person name="Copeland A."/>
            <person name="Lucas S."/>
            <person name="Lapidus A."/>
            <person name="Barry K."/>
            <person name="Detter J.C."/>
            <person name="Glavina del Rio T."/>
            <person name="Hammon N."/>
            <person name="Israni S."/>
            <person name="Dalin E."/>
            <person name="Tice H."/>
            <person name="Pitluck S."/>
            <person name="Sims D."/>
            <person name="Brettin T."/>
            <person name="Bruce D."/>
            <person name="Han C."/>
            <person name="Tapia R."/>
            <person name="Gilna P."/>
            <person name="Schmutz J."/>
            <person name="Larimer F."/>
            <person name="Land M."/>
            <person name="Hauser L."/>
            <person name="Kyrpides N."/>
            <person name="Mikhailova N."/>
            <person name="Oremland R.S."/>
            <person name="Hoeft S.E."/>
            <person name="Switzer-Blum J."/>
            <person name="Kulp T."/>
            <person name="King G."/>
            <person name="Tabita R."/>
            <person name="Witte B."/>
            <person name="Santini J.M."/>
            <person name="Basu P."/>
            <person name="Hollibaugh J.T."/>
            <person name="Xie G."/>
            <person name="Stolz J.F."/>
            <person name="Richardson P."/>
        </authorList>
    </citation>
    <scope>NUCLEOTIDE SEQUENCE [LARGE SCALE GENOMIC DNA]</scope>
    <source>
        <strain>ATCC BAA-1101 / DSM 17681 / MLHE-1</strain>
    </source>
</reference>
<proteinExistence type="inferred from homology"/>
<sequence>MGPDQEGLTYKAAGVDIDAGNELVDRIRDDVKRTMRPGVLGGLGGFGGLFEVPVDRYRRPVLVSGTDGVGTKLKLAIETGRHDGIGIDLVAMCANDVLVTGAEPLYFLDYYATGRLDVEVAAAVIRGIAEGCHQAGAALIGGETAEMPGMYAEGHYDLAGFCVGVVEKDEIIDGSRVGAGDALIALAASGPHSNGYSLIRKVLERAPEGAATEVDGQPVADLLMAPTRIYAKPVLDLIRNLPVHAMAHITGGGLPENLPRVLPEGLGAKLQPWSWPPVFRWLQQTGQIAEAEMLRTFNCGVGMVLVVPAEQADAALQRLRQTGETAWRLGEIGTHEAGAPRVQVVAA</sequence>
<keyword id="KW-0067">ATP-binding</keyword>
<keyword id="KW-0963">Cytoplasm</keyword>
<keyword id="KW-0436">Ligase</keyword>
<keyword id="KW-0547">Nucleotide-binding</keyword>
<keyword id="KW-0658">Purine biosynthesis</keyword>
<keyword id="KW-1185">Reference proteome</keyword>
<feature type="chain" id="PRO_1000062155" description="Phosphoribosylformylglycinamidine cyclo-ligase">
    <location>
        <begin position="1"/>
        <end position="347"/>
    </location>
</feature>
<accession>Q0ABB7</accession>
<organism>
    <name type="scientific">Alkalilimnicola ehrlichii (strain ATCC BAA-1101 / DSM 17681 / MLHE-1)</name>
    <dbReference type="NCBI Taxonomy" id="187272"/>
    <lineage>
        <taxon>Bacteria</taxon>
        <taxon>Pseudomonadati</taxon>
        <taxon>Pseudomonadota</taxon>
        <taxon>Gammaproteobacteria</taxon>
        <taxon>Chromatiales</taxon>
        <taxon>Ectothiorhodospiraceae</taxon>
        <taxon>Alkalilimnicola</taxon>
    </lineage>
</organism>
<gene>
    <name evidence="1" type="primary">purM</name>
    <name type="ordered locus">Mlg_0516</name>
</gene>
<evidence type="ECO:0000255" key="1">
    <source>
        <dbReference type="HAMAP-Rule" id="MF_00741"/>
    </source>
</evidence>
<protein>
    <recommendedName>
        <fullName evidence="1">Phosphoribosylformylglycinamidine cyclo-ligase</fullName>
        <ecNumber evidence="1">6.3.3.1</ecNumber>
    </recommendedName>
    <alternativeName>
        <fullName evidence="1">AIR synthase</fullName>
    </alternativeName>
    <alternativeName>
        <fullName evidence="1">AIRS</fullName>
    </alternativeName>
    <alternativeName>
        <fullName evidence="1">Phosphoribosyl-aminoimidazole synthetase</fullName>
    </alternativeName>
</protein>